<name>B2MG_ORENI</name>
<sequence>QVYWRHPGEYGKEDVLICHVSNFHPPDITITLLKNGE</sequence>
<dbReference type="EMBL" id="L05537">
    <property type="protein sequence ID" value="AAA49436.1"/>
    <property type="molecule type" value="mRNA"/>
</dbReference>
<dbReference type="PIR" id="I51085">
    <property type="entry name" value="I51085"/>
</dbReference>
<dbReference type="SMR" id="Q03423"/>
<dbReference type="STRING" id="8128.ENSONIP00000057098"/>
<dbReference type="eggNOG" id="ENOG502S8GM">
    <property type="taxonomic scope" value="Eukaryota"/>
</dbReference>
<dbReference type="InParanoid" id="Q03423"/>
<dbReference type="Proteomes" id="UP000005207">
    <property type="component" value="Unplaced"/>
</dbReference>
<dbReference type="GO" id="GO:0005576">
    <property type="term" value="C:extracellular region"/>
    <property type="evidence" value="ECO:0007669"/>
    <property type="project" value="UniProtKB-SubCell"/>
</dbReference>
<dbReference type="GO" id="GO:0042612">
    <property type="term" value="C:MHC class I protein complex"/>
    <property type="evidence" value="ECO:0007669"/>
    <property type="project" value="UniProtKB-KW"/>
</dbReference>
<dbReference type="GO" id="GO:0002474">
    <property type="term" value="P:antigen processing and presentation of peptide antigen via MHC class I"/>
    <property type="evidence" value="ECO:0007669"/>
    <property type="project" value="UniProtKB-KW"/>
</dbReference>
<dbReference type="Gene3D" id="2.60.40.10">
    <property type="entry name" value="Immunoglobulins"/>
    <property type="match status" value="1"/>
</dbReference>
<dbReference type="InterPro" id="IPR036179">
    <property type="entry name" value="Ig-like_dom_sf"/>
</dbReference>
<dbReference type="InterPro" id="IPR013783">
    <property type="entry name" value="Ig-like_fold"/>
</dbReference>
<dbReference type="InterPro" id="IPR003597">
    <property type="entry name" value="Ig_C1-set"/>
</dbReference>
<dbReference type="Pfam" id="PF07654">
    <property type="entry name" value="C1-set"/>
    <property type="match status" value="1"/>
</dbReference>
<dbReference type="SUPFAM" id="SSF48726">
    <property type="entry name" value="Immunoglobulin"/>
    <property type="match status" value="1"/>
</dbReference>
<evidence type="ECO:0000250" key="1"/>
<evidence type="ECO:0000255" key="2">
    <source>
        <dbReference type="PROSITE-ProRule" id="PRU00114"/>
    </source>
</evidence>
<evidence type="ECO:0000305" key="3"/>
<proteinExistence type="evidence at transcript level"/>
<organism>
    <name type="scientific">Oreochromis niloticus</name>
    <name type="common">Nile tilapia</name>
    <name type="synonym">Tilapia nilotica</name>
    <dbReference type="NCBI Taxonomy" id="8128"/>
    <lineage>
        <taxon>Eukaryota</taxon>
        <taxon>Metazoa</taxon>
        <taxon>Chordata</taxon>
        <taxon>Craniata</taxon>
        <taxon>Vertebrata</taxon>
        <taxon>Euteleostomi</taxon>
        <taxon>Actinopterygii</taxon>
        <taxon>Neopterygii</taxon>
        <taxon>Teleostei</taxon>
        <taxon>Neoteleostei</taxon>
        <taxon>Acanthomorphata</taxon>
        <taxon>Ovalentaria</taxon>
        <taxon>Cichlomorphae</taxon>
        <taxon>Cichliformes</taxon>
        <taxon>Cichlidae</taxon>
        <taxon>African cichlids</taxon>
        <taxon>Pseudocrenilabrinae</taxon>
        <taxon>Oreochromini</taxon>
        <taxon>Oreochromis</taxon>
    </lineage>
</organism>
<keyword id="KW-0391">Immunity</keyword>
<keyword id="KW-0393">Immunoglobulin domain</keyword>
<keyword id="KW-0490">MHC I</keyword>
<keyword id="KW-1185">Reference proteome</keyword>
<keyword id="KW-0964">Secreted</keyword>
<comment type="function">
    <text evidence="1">Component of the class I major histocompatibility complex (MHC). Involved in the presentation of peptide antigens to the immune system (By similarity).</text>
</comment>
<comment type="subunit">
    <text evidence="1">Heterodimer of an alpha chain and a beta chain. Beta-2-microglobulin is the beta-chain of major histocompatibility complex class I molecules (By similarity).</text>
</comment>
<comment type="subcellular location">
    <subcellularLocation>
        <location evidence="1">Secreted</location>
    </subcellularLocation>
</comment>
<comment type="similarity">
    <text evidence="3">Belongs to the beta-2-microglobulin family.</text>
</comment>
<protein>
    <recommendedName>
        <fullName>Beta-2-microglobulin</fullName>
    </recommendedName>
</protein>
<accession>Q03423</accession>
<gene>
    <name type="primary">b2m</name>
</gene>
<feature type="chain" id="PRO_0000080739" description="Beta-2-microglobulin">
    <location>
        <begin position="1" status="less than"/>
        <end position="37" status="greater than"/>
    </location>
</feature>
<feature type="domain" description="Ig-like C1-type" evidence="2">
    <location>
        <begin position="11"/>
        <end position="37" status="greater than"/>
    </location>
</feature>
<feature type="non-terminal residue">
    <location>
        <position position="1"/>
    </location>
</feature>
<feature type="non-terminal residue">
    <location>
        <position position="37"/>
    </location>
</feature>
<reference key="1">
    <citation type="journal article" date="1993" name="Immunogenetics">
        <title>Characterization of beta 2-microglobulin transcripts from two teleost species.</title>
        <authorList>
            <person name="Dixon B."/>
            <person name="Stet R.J."/>
            <person name="van Erp S.H."/>
            <person name="Pohajdak B."/>
        </authorList>
    </citation>
    <scope>NUCLEOTIDE SEQUENCE [MRNA]</scope>
</reference>